<protein>
    <recommendedName>
        <fullName>COP9 signalosome complex subunit 5</fullName>
        <ecNumber>3.4.-.-</ecNumber>
    </recommendedName>
</protein>
<name>CSN5_YEAS7</name>
<reference key="1">
    <citation type="journal article" date="2007" name="Proc. Natl. Acad. Sci. U.S.A.">
        <title>Genome sequencing and comparative analysis of Saccharomyces cerevisiae strain YJM789.</title>
        <authorList>
            <person name="Wei W."/>
            <person name="McCusker J.H."/>
            <person name="Hyman R.W."/>
            <person name="Jones T."/>
            <person name="Ning Y."/>
            <person name="Cao Z."/>
            <person name="Gu Z."/>
            <person name="Bruno D."/>
            <person name="Miranda M."/>
            <person name="Nguyen M."/>
            <person name="Wilhelmy J."/>
            <person name="Komp C."/>
            <person name="Tamse R."/>
            <person name="Wang X."/>
            <person name="Jia P."/>
            <person name="Luedi P."/>
            <person name="Oefner P.J."/>
            <person name="David L."/>
            <person name="Dietrich F.S."/>
            <person name="Li Y."/>
            <person name="Davis R.W."/>
            <person name="Steinmetz L.M."/>
        </authorList>
    </citation>
    <scope>NUCLEOTIDE SEQUENCE [LARGE SCALE GENOMIC DNA]</scope>
    <source>
        <strain>YJM789</strain>
    </source>
</reference>
<accession>A6ZXB7</accession>
<sequence length="440" mass="50784">MSLSNKTVKELRQLLKERYTVEDELTESIALSSMRFKPSQEPEFHALSQSSLLKTKLKQQSSTDIPSYTHVLISKLSCEKITHYAVRGGNIEIMGILMGFTLKDNIVVMDCFNLPVVGTETRVNAQLESYEYMVQYIDEMYNHNDGGDGRDYKGAKLNVVGWFHSHPGYDCWLSNIDIQTQDLNQRFQDPYVAIVVDPLKSLEDKILRMGAFRTIESKSDDNSATSYYELETIIFDSELNRALFETKLNLHCVIEDDESEQISLNRLIDSMKQYSYLMDSKNVRTRIKLATTSERVSNENKKNIDYQNRSTRSQFCLNTQRGDSTETSSFGSMFSGDNTSDVDMEDRNLTEFDSTDTSLCINGEPSIHVNRVERSSRSTDNFHNSKKRMNSNQEKCHDEGNDMLQRNVLETDYARAKNRILASKIKQYERLRFYKDTFTL</sequence>
<evidence type="ECO:0000250" key="1"/>
<evidence type="ECO:0000255" key="2">
    <source>
        <dbReference type="PROSITE-ProRule" id="PRU01182"/>
    </source>
</evidence>
<evidence type="ECO:0000256" key="3">
    <source>
        <dbReference type="SAM" id="MobiDB-lite"/>
    </source>
</evidence>
<evidence type="ECO:0000305" key="4"/>
<comment type="function">
    <text evidence="1">Catalytic component of the COP9 signalosome (CSN) complex that acts as an regulator of the ubiquitin (Ubl) conjugation pathway by mediating the deneddylation of the cullin subunit of SCF-type E3 ubiquitin-protein ligase complexes. The CSN complex is involved in the regulation of the mating pheromone response.</text>
</comment>
<comment type="cofactor">
    <cofactor evidence="1">
        <name>a divalent metal cation</name>
        <dbReference type="ChEBI" id="CHEBI:60240"/>
    </cofactor>
</comment>
<comment type="subunit">
    <text evidence="1">Component of a COP9 signalosome-like (CSN) complex, composed of at least RRI1/CSN5, CSN9, RRI2/CSN10, PCI8/CSN11, CSN12 and CSI1. Within this complex it probably interacts directly with CSN12. Also interacts with RPN5 (By similarity).</text>
</comment>
<comment type="subcellular location">
    <subcellularLocation>
        <location evidence="1">Cytoplasm</location>
    </subcellularLocation>
    <subcellularLocation>
        <location evidence="1">Nucleus</location>
    </subcellularLocation>
    <text evidence="1">Nuclear localization requires the formation of the CSN complex.</text>
</comment>
<comment type="domain">
    <text evidence="1">The JAMM motif is essential for the protease activity of the CSN complex resulting in deneddylation of cullins. It constitutes the catalytic center of the complex (By similarity).</text>
</comment>
<comment type="similarity">
    <text evidence="4">Belongs to the peptidase M67A family. CSN5 subfamily.</text>
</comment>
<comment type="sequence caution" evidence="4">
    <conflict type="erroneous initiation">
        <sequence resource="EMBL-CDS" id="EDN60147"/>
    </conflict>
</comment>
<feature type="chain" id="PRO_0000377628" description="COP9 signalosome complex subunit 5">
    <location>
        <begin position="1"/>
        <end position="440"/>
    </location>
</feature>
<feature type="domain" description="MPN" evidence="2">
    <location>
        <begin position="71"/>
        <end position="218"/>
    </location>
</feature>
<feature type="region of interest" description="Disordered" evidence="3">
    <location>
        <begin position="319"/>
        <end position="343"/>
    </location>
</feature>
<feature type="region of interest" description="Disordered" evidence="3">
    <location>
        <begin position="376"/>
        <end position="400"/>
    </location>
</feature>
<feature type="short sequence motif" description="JAMM motif" evidence="2">
    <location>
        <begin position="164"/>
        <end position="177"/>
    </location>
</feature>
<feature type="compositionally biased region" description="Polar residues" evidence="3">
    <location>
        <begin position="319"/>
        <end position="341"/>
    </location>
</feature>
<feature type="binding site" evidence="2">
    <location>
        <position position="164"/>
    </location>
    <ligand>
        <name>Zn(2+)</name>
        <dbReference type="ChEBI" id="CHEBI:29105"/>
        <note>catalytic</note>
    </ligand>
</feature>
<feature type="binding site" evidence="2">
    <location>
        <position position="166"/>
    </location>
    <ligand>
        <name>Zn(2+)</name>
        <dbReference type="ChEBI" id="CHEBI:29105"/>
        <note>catalytic</note>
    </ligand>
</feature>
<feature type="binding site" evidence="2">
    <location>
        <position position="177"/>
    </location>
    <ligand>
        <name>Zn(2+)</name>
        <dbReference type="ChEBI" id="CHEBI:29105"/>
        <note>catalytic</note>
    </ligand>
</feature>
<organism>
    <name type="scientific">Saccharomyces cerevisiae (strain YJM789)</name>
    <name type="common">Baker's yeast</name>
    <dbReference type="NCBI Taxonomy" id="307796"/>
    <lineage>
        <taxon>Eukaryota</taxon>
        <taxon>Fungi</taxon>
        <taxon>Dikarya</taxon>
        <taxon>Ascomycota</taxon>
        <taxon>Saccharomycotina</taxon>
        <taxon>Saccharomycetes</taxon>
        <taxon>Saccharomycetales</taxon>
        <taxon>Saccharomycetaceae</taxon>
        <taxon>Saccharomyces</taxon>
    </lineage>
</organism>
<dbReference type="EC" id="3.4.-.-"/>
<dbReference type="EMBL" id="AAFW02000145">
    <property type="protein sequence ID" value="EDN60147.1"/>
    <property type="status" value="ALT_INIT"/>
    <property type="molecule type" value="Genomic_DNA"/>
</dbReference>
<dbReference type="SMR" id="A6ZXB7"/>
<dbReference type="HOGENOM" id="CLU_031199_1_0_1"/>
<dbReference type="OrthoDB" id="34684at4893"/>
<dbReference type="Proteomes" id="UP000007060">
    <property type="component" value="Unassembled WGS sequence"/>
</dbReference>
<dbReference type="GO" id="GO:0008180">
    <property type="term" value="C:COP9 signalosome"/>
    <property type="evidence" value="ECO:0007669"/>
    <property type="project" value="UniProtKB-KW"/>
</dbReference>
<dbReference type="GO" id="GO:0005737">
    <property type="term" value="C:cytoplasm"/>
    <property type="evidence" value="ECO:0007669"/>
    <property type="project" value="UniProtKB-SubCell"/>
</dbReference>
<dbReference type="GO" id="GO:0046872">
    <property type="term" value="F:metal ion binding"/>
    <property type="evidence" value="ECO:0007669"/>
    <property type="project" value="UniProtKB-KW"/>
</dbReference>
<dbReference type="GO" id="GO:0008237">
    <property type="term" value="F:metallopeptidase activity"/>
    <property type="evidence" value="ECO:0007669"/>
    <property type="project" value="UniProtKB-KW"/>
</dbReference>
<dbReference type="GO" id="GO:0006508">
    <property type="term" value="P:proteolysis"/>
    <property type="evidence" value="ECO:0007669"/>
    <property type="project" value="UniProtKB-KW"/>
</dbReference>
<dbReference type="CDD" id="cd08069">
    <property type="entry name" value="MPN_RPN11_CSN5"/>
    <property type="match status" value="1"/>
</dbReference>
<dbReference type="FunFam" id="3.40.140.10:FF:000076">
    <property type="entry name" value="COP9 signalosome complex subunit 5"/>
    <property type="match status" value="1"/>
</dbReference>
<dbReference type="Gene3D" id="3.40.140.10">
    <property type="entry name" value="Cytidine Deaminase, domain 2"/>
    <property type="match status" value="1"/>
</dbReference>
<dbReference type="InterPro" id="IPR000555">
    <property type="entry name" value="JAMM/MPN+_dom"/>
</dbReference>
<dbReference type="InterPro" id="IPR050242">
    <property type="entry name" value="JAMM_MPN+_peptidase_M67A"/>
</dbReference>
<dbReference type="InterPro" id="IPR037518">
    <property type="entry name" value="MPN"/>
</dbReference>
<dbReference type="PANTHER" id="PTHR10410">
    <property type="entry name" value="EUKARYOTIC TRANSLATION INITIATION FACTOR 3 -RELATED"/>
    <property type="match status" value="1"/>
</dbReference>
<dbReference type="Pfam" id="PF01398">
    <property type="entry name" value="JAB"/>
    <property type="match status" value="1"/>
</dbReference>
<dbReference type="SMART" id="SM00232">
    <property type="entry name" value="JAB_MPN"/>
    <property type="match status" value="1"/>
</dbReference>
<dbReference type="SUPFAM" id="SSF102712">
    <property type="entry name" value="JAB1/MPN domain"/>
    <property type="match status" value="1"/>
</dbReference>
<dbReference type="PROSITE" id="PS50249">
    <property type="entry name" value="MPN"/>
    <property type="match status" value="1"/>
</dbReference>
<proteinExistence type="inferred from homology"/>
<gene>
    <name type="primary">RRI1</name>
    <name type="ORF">SCY_0705</name>
</gene>
<keyword id="KW-0963">Cytoplasm</keyword>
<keyword id="KW-0378">Hydrolase</keyword>
<keyword id="KW-0479">Metal-binding</keyword>
<keyword id="KW-0482">Metalloprotease</keyword>
<keyword id="KW-0539">Nucleus</keyword>
<keyword id="KW-0645">Protease</keyword>
<keyword id="KW-0736">Signalosome</keyword>
<keyword id="KW-0862">Zinc</keyword>